<keyword id="KW-0002">3D-structure</keyword>
<keyword id="KW-0007">Acetylation</keyword>
<keyword id="KW-0597">Phosphoprotein</keyword>
<keyword id="KW-1185">Reference proteome</keyword>
<evidence type="ECO:0000256" key="1">
    <source>
        <dbReference type="SAM" id="MobiDB-lite"/>
    </source>
</evidence>
<evidence type="ECO:0000269" key="2">
    <source>
    </source>
</evidence>
<evidence type="ECO:0007744" key="3">
    <source>
    </source>
</evidence>
<evidence type="ECO:0007744" key="4">
    <source>
    </source>
</evidence>
<evidence type="ECO:0007744" key="5">
    <source>
    </source>
</evidence>
<evidence type="ECO:0007744" key="6">
    <source>
    </source>
</evidence>
<gene>
    <name type="ordered locus">YMR124W</name>
    <name type="ORF">YM8564.06</name>
</gene>
<comment type="interaction">
    <interactant intactId="EBI-27256">
        <id>P39523</id>
    </interactant>
    <interactant intactId="EBI-13106">
        <id>P40091</id>
        <label>PEA2</label>
    </interactant>
    <organismsDiffer>false</organismsDiffer>
    <experiments>6</experiments>
</comment>
<comment type="interaction">
    <interactant intactId="EBI-27256">
        <id>P39523</id>
    </interactant>
    <interactant intactId="EBI-16735">
        <id>P40075</id>
        <label>SCS2</label>
    </interactant>
    <organismsDiffer>false</organismsDiffer>
    <experiments>4</experiments>
</comment>
<comment type="interaction">
    <interactant intactId="EBI-27256">
        <id>P39523</id>
    </interactant>
    <interactant intactId="EBI-22083">
        <id>Q07657</id>
        <label>SHS1</label>
    </interactant>
    <organismsDiffer>false</organismsDiffer>
    <experiments>5</experiments>
</comment>
<comment type="miscellaneous">
    <text evidence="2">Present with 166 molecules/cell in log phase SD medium.</text>
</comment>
<reference key="1">
    <citation type="journal article" date="1997" name="Nature">
        <title>The nucleotide sequence of Saccharomyces cerevisiae chromosome XIII.</title>
        <authorList>
            <person name="Bowman S."/>
            <person name="Churcher C.M."/>
            <person name="Badcock K."/>
            <person name="Brown D."/>
            <person name="Chillingworth T."/>
            <person name="Connor R."/>
            <person name="Dedman K."/>
            <person name="Devlin K."/>
            <person name="Gentles S."/>
            <person name="Hamlin N."/>
            <person name="Hunt S."/>
            <person name="Jagels K."/>
            <person name="Lye G."/>
            <person name="Moule S."/>
            <person name="Odell C."/>
            <person name="Pearson D."/>
            <person name="Rajandream M.A."/>
            <person name="Rice P."/>
            <person name="Skelton J."/>
            <person name="Walsh S.V."/>
            <person name="Whitehead S."/>
            <person name="Barrell B.G."/>
        </authorList>
    </citation>
    <scope>NUCLEOTIDE SEQUENCE [LARGE SCALE GENOMIC DNA]</scope>
    <source>
        <strain>ATCC 204508 / S288c</strain>
    </source>
</reference>
<reference key="2">
    <citation type="journal article" date="2014" name="G3 (Bethesda)">
        <title>The reference genome sequence of Saccharomyces cerevisiae: Then and now.</title>
        <authorList>
            <person name="Engel S.R."/>
            <person name="Dietrich F.S."/>
            <person name="Fisk D.G."/>
            <person name="Binkley G."/>
            <person name="Balakrishnan R."/>
            <person name="Costanzo M.C."/>
            <person name="Dwight S.S."/>
            <person name="Hitz B.C."/>
            <person name="Karra K."/>
            <person name="Nash R.S."/>
            <person name="Weng S."/>
            <person name="Wong E.D."/>
            <person name="Lloyd P."/>
            <person name="Skrzypek M.S."/>
            <person name="Miyasato S.R."/>
            <person name="Simison M."/>
            <person name="Cherry J.M."/>
        </authorList>
    </citation>
    <scope>GENOME REANNOTATION</scope>
    <source>
        <strain>ATCC 204508 / S288c</strain>
    </source>
</reference>
<reference key="3">
    <citation type="submission" date="1992-12" db="EMBL/GenBank/DDBJ databases">
        <authorList>
            <person name="Pandit S."/>
            <person name="Sternglanz R."/>
        </authorList>
    </citation>
    <scope>NUCLEOTIDE SEQUENCE [GENOMIC DNA] OF 770-943</scope>
</reference>
<reference key="4">
    <citation type="journal article" date="2003" name="Nature">
        <title>Global analysis of protein expression in yeast.</title>
        <authorList>
            <person name="Ghaemmaghami S."/>
            <person name="Huh W.-K."/>
            <person name="Bower K."/>
            <person name="Howson R.W."/>
            <person name="Belle A."/>
            <person name="Dephoure N."/>
            <person name="O'Shea E.K."/>
            <person name="Weissman J.S."/>
        </authorList>
    </citation>
    <scope>LEVEL OF PROTEIN EXPRESSION [LARGE SCALE ANALYSIS]</scope>
</reference>
<reference key="5">
    <citation type="journal article" date="2007" name="Proc. Natl. Acad. Sci. U.S.A.">
        <title>Analysis of phosphorylation sites on proteins from Saccharomyces cerevisiae by electron transfer dissociation (ETD) mass spectrometry.</title>
        <authorList>
            <person name="Chi A."/>
            <person name="Huttenhower C."/>
            <person name="Geer L.Y."/>
            <person name="Coon J.J."/>
            <person name="Syka J.E.P."/>
            <person name="Bai D.L."/>
            <person name="Shabanowitz J."/>
            <person name="Burke D.J."/>
            <person name="Troyanskaya O.G."/>
            <person name="Hunt D.F."/>
        </authorList>
    </citation>
    <scope>PHOSPHORYLATION [LARGE SCALE ANALYSIS] AT SER-649</scope>
    <scope>IDENTIFICATION BY MASS SPECTROMETRY [LARGE SCALE ANALYSIS]</scope>
</reference>
<reference key="6">
    <citation type="journal article" date="2008" name="Mol. Cell. Proteomics">
        <title>A multidimensional chromatography technology for in-depth phosphoproteome analysis.</title>
        <authorList>
            <person name="Albuquerque C.P."/>
            <person name="Smolka M.B."/>
            <person name="Payne S.H."/>
            <person name="Bafna V."/>
            <person name="Eng J."/>
            <person name="Zhou H."/>
        </authorList>
    </citation>
    <scope>PHOSPHORYLATION [LARGE SCALE ANALYSIS] AT SER-553 AND SER-766</scope>
    <scope>IDENTIFICATION BY MASS SPECTROMETRY [LARGE SCALE ANALYSIS]</scope>
</reference>
<reference key="7">
    <citation type="journal article" date="2009" name="Science">
        <title>Global analysis of Cdk1 substrate phosphorylation sites provides insights into evolution.</title>
        <authorList>
            <person name="Holt L.J."/>
            <person name="Tuch B.B."/>
            <person name="Villen J."/>
            <person name="Johnson A.D."/>
            <person name="Gygi S.P."/>
            <person name="Morgan D.O."/>
        </authorList>
    </citation>
    <scope>PHOSPHORYLATION [LARGE SCALE ANALYSIS] AT SER-586; SER-619; SER-681; SER-766 AND SER-771</scope>
    <scope>IDENTIFICATION BY MASS SPECTROMETRY [LARGE SCALE ANALYSIS]</scope>
</reference>
<reference key="8">
    <citation type="journal article" date="2012" name="Proc. Natl. Acad. Sci. U.S.A.">
        <title>N-terminal acetylome analyses and functional insights of the N-terminal acetyltransferase NatB.</title>
        <authorList>
            <person name="Van Damme P."/>
            <person name="Lasa M."/>
            <person name="Polevoda B."/>
            <person name="Gazquez C."/>
            <person name="Elosegui-Artola A."/>
            <person name="Kim D.S."/>
            <person name="De Juan-Pardo E."/>
            <person name="Demeyer K."/>
            <person name="Hole K."/>
            <person name="Larrea E."/>
            <person name="Timmerman E."/>
            <person name="Prieto J."/>
            <person name="Arnesen T."/>
            <person name="Sherman F."/>
            <person name="Gevaert K."/>
            <person name="Aldabe R."/>
        </authorList>
    </citation>
    <scope>ACETYLATION [LARGE SCALE ANALYSIS] AT MET-1</scope>
    <scope>IDENTIFICATION BY MASS SPECTROMETRY [LARGE SCALE ANALYSIS]</scope>
</reference>
<dbReference type="EMBL" id="Z49273">
    <property type="protein sequence ID" value="CAA89273.1"/>
    <property type="molecule type" value="Genomic_DNA"/>
</dbReference>
<dbReference type="EMBL" id="L07650">
    <property type="protein sequence ID" value="AAA35122.1"/>
    <property type="molecule type" value="Genomic_DNA"/>
</dbReference>
<dbReference type="EMBL" id="BK006946">
    <property type="protein sequence ID" value="DAA10021.1"/>
    <property type="molecule type" value="Genomic_DNA"/>
</dbReference>
<dbReference type="PIR" id="S54493">
    <property type="entry name" value="S54493"/>
</dbReference>
<dbReference type="PDB" id="6LP3">
    <property type="method" value="X-ray"/>
    <property type="resolution" value="3.55 A"/>
    <property type="chains" value="A/B/D/E=746-943"/>
</dbReference>
<dbReference type="PDBsum" id="6LP3"/>
<dbReference type="SMR" id="P39523"/>
<dbReference type="BioGRID" id="35301">
    <property type="interactions" value="147"/>
</dbReference>
<dbReference type="DIP" id="DIP-2977N"/>
<dbReference type="FunCoup" id="P39523">
    <property type="interactions" value="103"/>
</dbReference>
<dbReference type="IntAct" id="P39523">
    <property type="interactions" value="119"/>
</dbReference>
<dbReference type="MINT" id="P39523"/>
<dbReference type="STRING" id="4932.YMR124W"/>
<dbReference type="GlyGen" id="P39523">
    <property type="glycosylation" value="6 sites, 1 O-linked glycan (6 sites)"/>
</dbReference>
<dbReference type="iPTMnet" id="P39523"/>
<dbReference type="PaxDb" id="4932-YMR124W"/>
<dbReference type="PeptideAtlas" id="P39523"/>
<dbReference type="EnsemblFungi" id="YMR124W_mRNA">
    <property type="protein sequence ID" value="YMR124W"/>
    <property type="gene ID" value="YMR124W"/>
</dbReference>
<dbReference type="KEGG" id="sce:YMR124W"/>
<dbReference type="AGR" id="SGD:S000004731"/>
<dbReference type="SGD" id="S000004731">
    <property type="gene designation" value="YMR124W"/>
</dbReference>
<dbReference type="VEuPathDB" id="FungiDB:YMR124W"/>
<dbReference type="eggNOG" id="ENOG502S6M4">
    <property type="taxonomic scope" value="Eukaryota"/>
</dbReference>
<dbReference type="HOGENOM" id="CLU_312205_0_0_1"/>
<dbReference type="InParanoid" id="P39523"/>
<dbReference type="OMA" id="MQNQGMM"/>
<dbReference type="OrthoDB" id="3993678at2759"/>
<dbReference type="BioCyc" id="YEAST:G3O-32817-MONOMER"/>
<dbReference type="BioGRID-ORCS" id="855154">
    <property type="hits" value="0 hits in 10 CRISPR screens"/>
</dbReference>
<dbReference type="PRO" id="PR:P39523"/>
<dbReference type="Proteomes" id="UP000002311">
    <property type="component" value="Chromosome XIII"/>
</dbReference>
<dbReference type="RNAct" id="P39523">
    <property type="molecule type" value="protein"/>
</dbReference>
<dbReference type="GO" id="GO:0005935">
    <property type="term" value="C:cellular bud neck"/>
    <property type="evidence" value="ECO:0000353"/>
    <property type="project" value="SGD"/>
</dbReference>
<dbReference type="GO" id="GO:0005737">
    <property type="term" value="C:cytoplasm"/>
    <property type="evidence" value="ECO:0007005"/>
    <property type="project" value="SGD"/>
</dbReference>
<dbReference type="GO" id="GO:0061163">
    <property type="term" value="P:endoplasmic reticulum polarization"/>
    <property type="evidence" value="ECO:0000314"/>
    <property type="project" value="SGD"/>
</dbReference>
<organism>
    <name type="scientific">Saccharomyces cerevisiae (strain ATCC 204508 / S288c)</name>
    <name type="common">Baker's yeast</name>
    <dbReference type="NCBI Taxonomy" id="559292"/>
    <lineage>
        <taxon>Eukaryota</taxon>
        <taxon>Fungi</taxon>
        <taxon>Dikarya</taxon>
        <taxon>Ascomycota</taxon>
        <taxon>Saccharomycotina</taxon>
        <taxon>Saccharomycetes</taxon>
        <taxon>Saccharomycetales</taxon>
        <taxon>Saccharomycetaceae</taxon>
        <taxon>Saccharomyces</taxon>
    </lineage>
</organism>
<sequence length="943" mass="105914">MDAGLSTMATRNGQSSARVKLRNNLLNNDIGNIDIRDETPISRNGNDSNINIQPSSVPQQQQQQQQYYRNGMNEAPIQAPLQQRQIPMQNYSQQQRQQQQYNFEYSNPHMNEIPLMQHNFTKPSLSNNRDNVNGKKASSFTQSSFSNFFKHKHQFGKSKKNTKGTGGGGDGDDDDEVILDDSANSDLTFNDIQTFGHKGGDKYGYGGDSTPIIPTLVTKDRGNMSNTEYRKYITNQRKTAMNAMAKQTKNGTLASLPPRAMSLQSFPNGNPLMQAPTPHPRFQPNKMVSANYSRSNSLMSGPPGQFRQPQQQRMLPMNNYNNHPGQFQNTPPVMPSGQQPPQQPRTLSLTNGPRYSPQNPRPFAGHQQISQRQQQQQQQLQLHPMSEGYRTMSLQSQNVPQGFNPWSPNDNDRKAVSMKQPISQSSISSKNNSAYSIPNVQNNSLTTFSPSSPTDATAMPNSTKQGSSPLKKQVNIDQPIENKGKLNVLQLSTPQQNELKEKERKLAEMEKSLREREALVEEKEKERAEKNTEANEEEEISHESDDLNLRPASALETGLKDLKLESESAVANRASLSTFSSTFSDSPSKQRIINTRTGMYKLENSTDINEYVTAQEFPSPGKYNSNSDNGEMNTTNEVDFDFNTSKRASLLQSIPERDPKRNVSDATIKRRESDGNGRRLSNVNISMNQENINNDTFLYKKNNRDGHLSAVSHMSSSSRRSFISNTLPLNIDSASESDNFVPHMDGSPSKTKSAPVSYDKDGMNASEEDFSFDNTLAKPYEPLYARRGDITSAGSTSGEDSSQPKMITISGEQLNLITENKELMNELTLVSTELAESIKRETELEERIRLYETNNSAPSFDDSSSVSFSDFEKELRKKSSKIVQLIQQLNDERLKRFIAEEQLLLQENGTKPSSMELVGRIENLNKLIDERDSEIEMLKGRLQ</sequence>
<proteinExistence type="evidence at protein level"/>
<feature type="chain" id="PRO_0000203298" description="Uncharacterized protein YMR124W">
    <location>
        <begin position="1"/>
        <end position="943"/>
    </location>
</feature>
<feature type="region of interest" description="Disordered" evidence="1">
    <location>
        <begin position="37"/>
        <end position="63"/>
    </location>
</feature>
<feature type="region of interest" description="Disordered" evidence="1">
    <location>
        <begin position="152"/>
        <end position="177"/>
    </location>
</feature>
<feature type="region of interest" description="Disordered" evidence="1">
    <location>
        <begin position="315"/>
        <end position="381"/>
    </location>
</feature>
<feature type="region of interest" description="Disordered" evidence="1">
    <location>
        <begin position="397"/>
        <end position="472"/>
    </location>
</feature>
<feature type="region of interest" description="Disordered" evidence="1">
    <location>
        <begin position="515"/>
        <end position="546"/>
    </location>
</feature>
<feature type="region of interest" description="Disordered" evidence="1">
    <location>
        <begin position="616"/>
        <end position="639"/>
    </location>
</feature>
<feature type="region of interest" description="Disordered" evidence="1">
    <location>
        <begin position="654"/>
        <end position="683"/>
    </location>
</feature>
<feature type="compositionally biased region" description="Polar residues" evidence="1">
    <location>
        <begin position="41"/>
        <end position="58"/>
    </location>
</feature>
<feature type="compositionally biased region" description="Basic residues" evidence="1">
    <location>
        <begin position="152"/>
        <end position="162"/>
    </location>
</feature>
<feature type="compositionally biased region" description="Polar residues" evidence="1">
    <location>
        <begin position="318"/>
        <end position="358"/>
    </location>
</feature>
<feature type="compositionally biased region" description="Low complexity" evidence="1">
    <location>
        <begin position="367"/>
        <end position="381"/>
    </location>
</feature>
<feature type="compositionally biased region" description="Polar residues" evidence="1">
    <location>
        <begin position="397"/>
        <end position="409"/>
    </location>
</feature>
<feature type="compositionally biased region" description="Low complexity" evidence="1">
    <location>
        <begin position="417"/>
        <end position="433"/>
    </location>
</feature>
<feature type="compositionally biased region" description="Polar residues" evidence="1">
    <location>
        <begin position="434"/>
        <end position="470"/>
    </location>
</feature>
<feature type="compositionally biased region" description="Basic and acidic residues" evidence="1">
    <location>
        <begin position="515"/>
        <end position="533"/>
    </location>
</feature>
<feature type="compositionally biased region" description="Polar residues" evidence="1">
    <location>
        <begin position="622"/>
        <end position="639"/>
    </location>
</feature>
<feature type="compositionally biased region" description="Basic and acidic residues" evidence="1">
    <location>
        <begin position="655"/>
        <end position="677"/>
    </location>
</feature>
<feature type="modified residue" description="N-acetylmethionine" evidence="6">
    <location>
        <position position="1"/>
    </location>
</feature>
<feature type="modified residue" description="Phosphoserine" evidence="4">
    <location>
        <position position="553"/>
    </location>
</feature>
<feature type="modified residue" description="Phosphoserine" evidence="5">
    <location>
        <position position="586"/>
    </location>
</feature>
<feature type="modified residue" description="Phosphoserine" evidence="5">
    <location>
        <position position="619"/>
    </location>
</feature>
<feature type="modified residue" description="Phosphoserine" evidence="3">
    <location>
        <position position="649"/>
    </location>
</feature>
<feature type="modified residue" description="Phosphoserine" evidence="5">
    <location>
        <position position="681"/>
    </location>
</feature>
<feature type="modified residue" description="Phosphoserine" evidence="4 5">
    <location>
        <position position="766"/>
    </location>
</feature>
<feature type="modified residue" description="Phosphoserine" evidence="5">
    <location>
        <position position="771"/>
    </location>
</feature>
<accession>P39523</accession>
<accession>D6VZU7</accession>
<name>YM11_YEAST</name>
<protein>
    <recommendedName>
        <fullName>Uncharacterized protein YMR124W</fullName>
    </recommendedName>
</protein>